<sequence>MKGTSEVKPMETHRKLLKPLVEKRRRERINNSLEKLRIFLFQTLKSEKLKNPKVEKAEILECTVQFLQSRKLLPLDREAVDKEYQSGFQHCLETTLHFMNSKPDMNGVTKELLSHQMSSCKSPSDAWSPNCAPLTKHVPSLSYQDSAPHLVSNSISISPTKTLVDSHFTYQSFKTWRPWV</sequence>
<gene>
    <name type="primary">hes7.1-a</name>
</gene>
<organism>
    <name type="scientific">Xenopus laevis</name>
    <name type="common">African clawed frog</name>
    <dbReference type="NCBI Taxonomy" id="8355"/>
    <lineage>
        <taxon>Eukaryota</taxon>
        <taxon>Metazoa</taxon>
        <taxon>Chordata</taxon>
        <taxon>Craniata</taxon>
        <taxon>Vertebrata</taxon>
        <taxon>Euteleostomi</taxon>
        <taxon>Amphibia</taxon>
        <taxon>Batrachia</taxon>
        <taxon>Anura</taxon>
        <taxon>Pipoidea</taxon>
        <taxon>Pipidae</taxon>
        <taxon>Xenopodinae</taxon>
        <taxon>Xenopus</taxon>
        <taxon>Xenopus</taxon>
    </lineage>
</organism>
<protein>
    <recommendedName>
        <fullName>Transcription factor HES-7.1-A</fullName>
    </recommendedName>
    <alternativeName>
        <fullName>HES-related protein 1-A</fullName>
        <shortName evidence="11">XHR1-A</shortName>
    </alternativeName>
    <alternativeName>
        <fullName>HES-related protein 1-A'</fullName>
        <shortName evidence="12">XHR1-A'</shortName>
    </alternativeName>
    <alternativeName>
        <fullName>Hairy and enhancer of split 7.1-A</fullName>
    </alternativeName>
</protein>
<reference evidence="9 11" key="1">
    <citation type="journal article" date="2001" name="Mech. Dev.">
        <title>Early patterning of the prospective midbrain-hindbrain boundary by the HES-related gene XHR1 in Xenopus embryos.</title>
        <authorList>
            <person name="Shinga J."/>
            <person name="Itoh M."/>
            <person name="Shiokawa K."/>
            <person name="Taira S."/>
            <person name="Taira M."/>
        </authorList>
    </citation>
    <scope>NUCLEOTIDE SEQUENCE [MRNA]</scope>
    <scope>FUNCTION</scope>
    <scope>TISSUE SPECIFICITY</scope>
    <scope>MUTAGENESIS OF GLU-22; LYS-23 AND ARG-26</scope>
    <source>
        <tissue evidence="7">Gastrula</tissue>
    </source>
</reference>
<reference evidence="10" key="2">
    <citation type="submission" date="2008-11" db="EMBL/GenBank/DDBJ databases">
        <authorList>
            <consortium name="NIH - Xenopus Gene Collection (XGC) project"/>
        </authorList>
    </citation>
    <scope>NUCLEOTIDE SEQUENCE [LARGE SCALE MRNA]</scope>
    <source>
        <tissue evidence="10">Gastrula</tissue>
    </source>
</reference>
<reference evidence="9" key="3">
    <citation type="journal article" date="2005" name="Dev. Biol.">
        <title>Identification of target genes for the Xenopus Hes-related protein XHR1, a prepattern factor specifying the midbrain-hindbrain boundary.</title>
        <authorList>
            <person name="Takada H."/>
            <person name="Hattori D."/>
            <person name="Kitayama A."/>
            <person name="Ueno N."/>
            <person name="Taira M."/>
        </authorList>
    </citation>
    <scope>FUNCTION</scope>
    <scope>LACK OF INDUCTION BY NOTCH SIGNALING</scope>
</reference>
<comment type="function">
    <text evidence="3 7 8">Transcriptional repressor. Represses transcription from both N box- and E box-containing promoters (By similarity). Demarcates the prospective midbrain-hindbrain boundary (MHB) region in the neuroectoderm in early gastrulae embryos by repressing transcription of a number of target genes.</text>
</comment>
<comment type="subunit">
    <text evidence="2">Transcription repression requires formation of a complex with a corepressor protein of the Groucho/TLE family.</text>
</comment>
<comment type="subcellular location">
    <subcellularLocation>
        <location evidence="3 5 6">Nucleus</location>
    </subcellularLocation>
</comment>
<comment type="tissue specificity">
    <text evidence="7">Expressed in the presumptive midbrain-hindbrain boundary (MHB) as early as the early gastrula stage (stage 10.5). Expression in the MHB continues through to tailbud stage. Also transiently expressed in the eye anlage at late neurula stage.</text>
</comment>
<comment type="induction">
    <text evidence="8">Not induced by Notch-signaling.</text>
</comment>
<comment type="domain">
    <text>Has a particular type of basic domain which includes a helix-interrupting proline.</text>
</comment>
<comment type="domain">
    <text evidence="1">The C-terminal WRPW motif is a transcriptional repression motif which is necessary for interaction with Groucho/TLE family members, transcriptional corepressors recruited to specific target DNA by Hairy-related proteins.</text>
</comment>
<name>HE71A_XENLA</name>
<proteinExistence type="evidence at protein level"/>
<keyword id="KW-0217">Developmental protein</keyword>
<keyword id="KW-0238">DNA-binding</keyword>
<keyword id="KW-0539">Nucleus</keyword>
<keyword id="KW-1185">Reference proteome</keyword>
<keyword id="KW-0678">Repressor</keyword>
<keyword id="KW-0804">Transcription</keyword>
<keyword id="KW-0805">Transcription regulation</keyword>
<accession>Q8UW74</accession>
<accession>Q8UW73</accession>
<evidence type="ECO:0000250" key="1"/>
<evidence type="ECO:0000250" key="2">
    <source>
        <dbReference type="UniProtKB" id="P14003"/>
    </source>
</evidence>
<evidence type="ECO:0000250" key="3">
    <source>
        <dbReference type="UniProtKB" id="Q8BKT2"/>
    </source>
</evidence>
<evidence type="ECO:0000255" key="4"/>
<evidence type="ECO:0000255" key="5">
    <source>
        <dbReference type="PROSITE-ProRule" id="PRU00380"/>
    </source>
</evidence>
<evidence type="ECO:0000255" key="6">
    <source>
        <dbReference type="PROSITE-ProRule" id="PRU00981"/>
    </source>
</evidence>
<evidence type="ECO:0000269" key="7">
    <source>
    </source>
</evidence>
<evidence type="ECO:0000269" key="8">
    <source>
    </source>
</evidence>
<evidence type="ECO:0000305" key="9"/>
<evidence type="ECO:0000312" key="10">
    <source>
        <dbReference type="EMBL" id="AAI70054.1"/>
    </source>
</evidence>
<evidence type="ECO:0000312" key="11">
    <source>
        <dbReference type="EMBL" id="BAB78540.1"/>
    </source>
</evidence>
<evidence type="ECO:0000312" key="12">
    <source>
        <dbReference type="EMBL" id="BAB78541.1"/>
    </source>
</evidence>
<feature type="chain" id="PRO_0000370215" description="Transcription factor HES-7.1-A">
    <location>
        <begin position="1"/>
        <end position="180"/>
    </location>
</feature>
<feature type="domain" description="bHLH" evidence="6">
    <location>
        <begin position="13"/>
        <end position="70"/>
    </location>
</feature>
<feature type="domain" description="Orange" evidence="5">
    <location>
        <begin position="84"/>
        <end position="116"/>
    </location>
</feature>
<feature type="short sequence motif" description="WRPW motif" evidence="4">
    <location>
        <begin position="176"/>
        <end position="179"/>
    </location>
</feature>
<feature type="mutagenesis site" description="Reduces MHB gene expression in a dominant negative manner; when associated with A-23 and A-26." evidence="7">
    <original>E</original>
    <variation>A</variation>
    <location>
        <position position="22"/>
    </location>
</feature>
<feature type="mutagenesis site" description="Reduces MHB gene expression in a dominant negative manner; when associated with A-22 and A-26." evidence="7">
    <original>K</original>
    <variation>A</variation>
    <location>
        <position position="23"/>
    </location>
</feature>
<feature type="mutagenesis site" description="Reduces MHB gene expression in a dominant negative manner; when associated with A-22 and A-23." evidence="7">
    <original>R</original>
    <variation>A</variation>
    <location>
        <position position="26"/>
    </location>
</feature>
<feature type="sequence conflict" description="In Ref. 1; BAB78541." evidence="9" ref="1">
    <original>P</original>
    <variation>L</variation>
    <location>
        <position position="148"/>
    </location>
</feature>
<dbReference type="EMBL" id="AB071432">
    <property type="protein sequence ID" value="BAB78540.1"/>
    <property type="molecule type" value="mRNA"/>
</dbReference>
<dbReference type="EMBL" id="AB071433">
    <property type="protein sequence ID" value="BAB78541.1"/>
    <property type="molecule type" value="mRNA"/>
</dbReference>
<dbReference type="EMBL" id="BC170054">
    <property type="protein sequence ID" value="AAI70054.1"/>
    <property type="molecule type" value="mRNA"/>
</dbReference>
<dbReference type="SMR" id="Q8UW74"/>
<dbReference type="ELM" id="Q8UW74"/>
<dbReference type="AGR" id="Xenbase:XB-GENE-876475"/>
<dbReference type="Xenbase" id="XB-GENE-876475">
    <property type="gene designation" value="hes7.L"/>
</dbReference>
<dbReference type="OMA" id="PMEAHRK"/>
<dbReference type="Proteomes" id="UP000186698">
    <property type="component" value="Unplaced"/>
</dbReference>
<dbReference type="GO" id="GO:0005634">
    <property type="term" value="C:nucleus"/>
    <property type="evidence" value="ECO:0000250"/>
    <property type="project" value="UniProtKB"/>
</dbReference>
<dbReference type="GO" id="GO:0046983">
    <property type="term" value="F:protein dimerization activity"/>
    <property type="evidence" value="ECO:0007669"/>
    <property type="project" value="InterPro"/>
</dbReference>
<dbReference type="GO" id="GO:0000978">
    <property type="term" value="F:RNA polymerase II cis-regulatory region sequence-specific DNA binding"/>
    <property type="evidence" value="ECO:0000318"/>
    <property type="project" value="GO_Central"/>
</dbReference>
<dbReference type="GO" id="GO:0030917">
    <property type="term" value="P:midbrain-hindbrain boundary development"/>
    <property type="evidence" value="ECO:0000315"/>
    <property type="project" value="UniProtKB"/>
</dbReference>
<dbReference type="GO" id="GO:0045892">
    <property type="term" value="P:negative regulation of DNA-templated transcription"/>
    <property type="evidence" value="ECO:0000315"/>
    <property type="project" value="UniProtKB"/>
</dbReference>
<dbReference type="GO" id="GO:0000122">
    <property type="term" value="P:negative regulation of transcription by RNA polymerase II"/>
    <property type="evidence" value="ECO:0000315"/>
    <property type="project" value="UniProtKB"/>
</dbReference>
<dbReference type="GO" id="GO:0050767">
    <property type="term" value="P:regulation of neurogenesis"/>
    <property type="evidence" value="ECO:0000318"/>
    <property type="project" value="GO_Central"/>
</dbReference>
<dbReference type="CDD" id="cd11462">
    <property type="entry name" value="bHLH-O_HES7"/>
    <property type="match status" value="1"/>
</dbReference>
<dbReference type="FunFam" id="4.10.280.10:FF:000063">
    <property type="entry name" value="transcription factor HES-7 isoform X1"/>
    <property type="match status" value="1"/>
</dbReference>
<dbReference type="Gene3D" id="4.10.280.10">
    <property type="entry name" value="Helix-loop-helix DNA-binding domain"/>
    <property type="match status" value="1"/>
</dbReference>
<dbReference type="InterPro" id="IPR011598">
    <property type="entry name" value="bHLH_dom"/>
</dbReference>
<dbReference type="InterPro" id="IPR032644">
    <property type="entry name" value="HES-7_bHLH-O"/>
</dbReference>
<dbReference type="InterPro" id="IPR050370">
    <property type="entry name" value="HES_HEY"/>
</dbReference>
<dbReference type="InterPro" id="IPR036638">
    <property type="entry name" value="HLH_DNA-bd_sf"/>
</dbReference>
<dbReference type="InterPro" id="IPR003650">
    <property type="entry name" value="Orange_dom"/>
</dbReference>
<dbReference type="PANTHER" id="PTHR10985">
    <property type="entry name" value="BASIC HELIX-LOOP-HELIX TRANSCRIPTION FACTOR, HES-RELATED"/>
    <property type="match status" value="1"/>
</dbReference>
<dbReference type="Pfam" id="PF07527">
    <property type="entry name" value="Hairy_orange"/>
    <property type="match status" value="1"/>
</dbReference>
<dbReference type="Pfam" id="PF00010">
    <property type="entry name" value="HLH"/>
    <property type="match status" value="1"/>
</dbReference>
<dbReference type="SMART" id="SM00353">
    <property type="entry name" value="HLH"/>
    <property type="match status" value="1"/>
</dbReference>
<dbReference type="SUPFAM" id="SSF47459">
    <property type="entry name" value="HLH, helix-loop-helix DNA-binding domain"/>
    <property type="match status" value="1"/>
</dbReference>
<dbReference type="PROSITE" id="PS50888">
    <property type="entry name" value="BHLH"/>
    <property type="match status" value="1"/>
</dbReference>
<dbReference type="PROSITE" id="PS51054">
    <property type="entry name" value="ORANGE"/>
    <property type="match status" value="1"/>
</dbReference>